<reference evidence="6" key="1">
    <citation type="journal article" date="2006" name="Mol. Cell. Proteomics">
        <title>Identification and characterization of new protein chemoattractants in the frog skin secretome.</title>
        <authorList>
            <person name="Leroy B."/>
            <person name="Toubeau G."/>
            <person name="Falmagne P."/>
            <person name="Wattiez R."/>
        </authorList>
    </citation>
    <scope>PROTEIN SEQUENCE</scope>
    <scope>SUBCELLULAR LOCATION</scope>
    <scope>TISSUE SPECIFICITY</scope>
    <scope>MASS SPECTROMETRY</scope>
    <scope>CALCIUM-BINDING</scope>
    <source>
        <tissue evidence="4">Skin secretion</tissue>
    </source>
</reference>
<proteinExistence type="evidence at protein level"/>
<accession>P84536</accession>
<sequence length="43" mass="4907">KVFEILDMDRSFIEEELKLFALSSAETAAFLKIGVEEFQALVK</sequence>
<protein>
    <recommendedName>
        <fullName evidence="5">Parvalbumin beta</fullName>
    </recommendedName>
</protein>
<evidence type="ECO:0000250" key="1">
    <source>
        <dbReference type="UniProtKB" id="P02621"/>
    </source>
</evidence>
<evidence type="ECO:0000255" key="2"/>
<evidence type="ECO:0000255" key="3">
    <source>
        <dbReference type="PROSITE-ProRule" id="PRU00448"/>
    </source>
</evidence>
<evidence type="ECO:0000269" key="4">
    <source>
    </source>
</evidence>
<evidence type="ECO:0000303" key="5">
    <source>
    </source>
</evidence>
<evidence type="ECO:0000305" key="6"/>
<organism>
    <name type="scientific">Rana temporaria</name>
    <name type="common">European common frog</name>
    <dbReference type="NCBI Taxonomy" id="8407"/>
    <lineage>
        <taxon>Eukaryota</taxon>
        <taxon>Metazoa</taxon>
        <taxon>Chordata</taxon>
        <taxon>Craniata</taxon>
        <taxon>Vertebrata</taxon>
        <taxon>Euteleostomi</taxon>
        <taxon>Amphibia</taxon>
        <taxon>Batrachia</taxon>
        <taxon>Anura</taxon>
        <taxon>Neobatrachia</taxon>
        <taxon>Ranoidea</taxon>
        <taxon>Ranidae</taxon>
        <taxon>Rana</taxon>
        <taxon>Rana</taxon>
    </lineage>
</organism>
<feature type="chain" id="PRO_0000073618" description="Parvalbumin beta">
    <location>
        <begin position="1" status="less than"/>
        <end position="43" status="greater than"/>
    </location>
</feature>
<feature type="domain" description="EF-hand 1" evidence="3">
    <location>
        <begin position="1" status="less than"/>
        <end position="20" status="greater than"/>
    </location>
</feature>
<feature type="domain" description="EF-hand 2" evidence="3">
    <location>
        <begin position="22"/>
        <end position="43" status="greater than"/>
    </location>
</feature>
<feature type="binding site" evidence="1">
    <location>
        <position position="7"/>
    </location>
    <ligand>
        <name>Ca(2+)</name>
        <dbReference type="ChEBI" id="CHEBI:29108"/>
        <label>1</label>
    </ligand>
</feature>
<feature type="binding site" evidence="1">
    <location>
        <position position="9"/>
    </location>
    <ligand>
        <name>Ca(2+)</name>
        <dbReference type="ChEBI" id="CHEBI:29108"/>
        <label>1</label>
    </ligand>
</feature>
<feature type="binding site" evidence="1">
    <location>
        <position position="11"/>
    </location>
    <ligand>
        <name>Ca(2+)</name>
        <dbReference type="ChEBI" id="CHEBI:29108"/>
        <label>1</label>
    </ligand>
</feature>
<feature type="binding site" evidence="1">
    <location>
        <position position="12"/>
    </location>
    <ligand>
        <name>Ca(2+)</name>
        <dbReference type="ChEBI" id="CHEBI:29108"/>
        <label>1</label>
    </ligand>
</feature>
<feature type="binding site" evidence="1">
    <location>
        <position position="14"/>
    </location>
    <ligand>
        <name>Ca(2+)</name>
        <dbReference type="ChEBI" id="CHEBI:29108"/>
        <label>1</label>
    </ligand>
</feature>
<feature type="binding site" evidence="1">
    <location>
        <position position="16"/>
    </location>
    <ligand>
        <name>Ca(2+)</name>
        <dbReference type="ChEBI" id="CHEBI:29108"/>
        <label>1</label>
    </ligand>
</feature>
<feature type="binding site" evidence="1">
    <location>
        <position position="37"/>
    </location>
    <ligand>
        <name>Ca(2+)</name>
        <dbReference type="ChEBI" id="CHEBI:29108"/>
        <label>2</label>
    </ligand>
</feature>
<feature type="non-consecutive residues" evidence="5">
    <location>
        <begin position="20"/>
        <end position="21"/>
    </location>
</feature>
<feature type="non-consecutive residues" evidence="5">
    <location>
        <begin position="32"/>
        <end position="33"/>
    </location>
</feature>
<feature type="non-terminal residue" evidence="5">
    <location>
        <position position="1"/>
    </location>
</feature>
<feature type="non-terminal residue" evidence="5">
    <location>
        <position position="43"/>
    </location>
</feature>
<keyword id="KW-0106">Calcium</keyword>
<keyword id="KW-0963">Cytoplasm</keyword>
<keyword id="KW-0903">Direct protein sequencing</keyword>
<keyword id="KW-0479">Metal-binding</keyword>
<keyword id="KW-0677">Repeat</keyword>
<keyword id="KW-0964">Secreted</keyword>
<comment type="function">
    <text>In muscle, parvalbumin is thought to be involved in relaxation after contraction. It binds two calcium ions.</text>
</comment>
<comment type="subcellular location">
    <subcellularLocation>
        <location evidence="4">Cytoplasm</location>
    </subcellularLocation>
    <subcellularLocation>
        <location evidence="4">Secreted</location>
    </subcellularLocation>
    <text evidence="4">Cytoplasmic in muscle. Secreted in cutaneous mucus.</text>
</comment>
<comment type="tissue specificity">
    <text evidence="4">Detected in muscle and cutaneous mucus. In the skin, detected in cells in the basal region of the glandular epithelium of the dermal mucus glands (at protein level).</text>
</comment>
<comment type="mass spectrometry" mass="11796.0" error="0.2" method="MALDI" evidence="4"/>
<comment type="similarity">
    <text evidence="2">Belongs to the parvalbumin family.</text>
</comment>
<dbReference type="GO" id="GO:0005737">
    <property type="term" value="C:cytoplasm"/>
    <property type="evidence" value="ECO:0007669"/>
    <property type="project" value="UniProtKB-SubCell"/>
</dbReference>
<dbReference type="GO" id="GO:0005576">
    <property type="term" value="C:extracellular region"/>
    <property type="evidence" value="ECO:0007669"/>
    <property type="project" value="UniProtKB-SubCell"/>
</dbReference>
<dbReference type="GO" id="GO:0046872">
    <property type="term" value="F:metal ion binding"/>
    <property type="evidence" value="ECO:0007669"/>
    <property type="project" value="UniProtKB-KW"/>
</dbReference>
<name>PRVB_RANTE</name>